<proteinExistence type="inferred from homology"/>
<comment type="function">
    <text evidence="1">Involved in the biosynthesis of isopentenyl diphosphate (IPP) and dimethylallyl diphosphate (DMAPP), two major building blocks of isoprenoid compounds. Catalyzes the conversion of 4-diphosphocytidyl-2-C-methyl-D-erythritol 2-phosphate (CDP-ME2P) to 2-C-methyl-D-erythritol 2,4-cyclodiphosphate (ME-CPP) with a corresponding release of cytidine 5-monophosphate (CMP).</text>
</comment>
<comment type="catalytic activity">
    <reaction evidence="1">
        <text>4-CDP-2-C-methyl-D-erythritol 2-phosphate = 2-C-methyl-D-erythritol 2,4-cyclic diphosphate + CMP</text>
        <dbReference type="Rhea" id="RHEA:23864"/>
        <dbReference type="ChEBI" id="CHEBI:57919"/>
        <dbReference type="ChEBI" id="CHEBI:58483"/>
        <dbReference type="ChEBI" id="CHEBI:60377"/>
        <dbReference type="EC" id="4.6.1.12"/>
    </reaction>
</comment>
<comment type="cofactor">
    <cofactor evidence="1">
        <name>a divalent metal cation</name>
        <dbReference type="ChEBI" id="CHEBI:60240"/>
    </cofactor>
    <text evidence="1">Binds 1 divalent metal cation per subunit.</text>
</comment>
<comment type="pathway">
    <text evidence="1">Isoprenoid biosynthesis; isopentenyl diphosphate biosynthesis via DXP pathway; isopentenyl diphosphate from 1-deoxy-D-xylulose 5-phosphate: step 4/6.</text>
</comment>
<comment type="subunit">
    <text evidence="1">Homotrimer.</text>
</comment>
<comment type="similarity">
    <text evidence="1">Belongs to the IspF family.</text>
</comment>
<dbReference type="EC" id="4.6.1.12" evidence="1"/>
<dbReference type="EMBL" id="AM286690">
    <property type="protein sequence ID" value="CAL16615.1"/>
    <property type="molecule type" value="Genomic_DNA"/>
</dbReference>
<dbReference type="RefSeq" id="WP_011588450.1">
    <property type="nucleotide sequence ID" value="NC_008260.1"/>
</dbReference>
<dbReference type="SMR" id="Q0VQD3"/>
<dbReference type="STRING" id="393595.ABO_1167"/>
<dbReference type="KEGG" id="abo:ABO_1167"/>
<dbReference type="eggNOG" id="COG0245">
    <property type="taxonomic scope" value="Bacteria"/>
</dbReference>
<dbReference type="HOGENOM" id="CLU_084630_2_0_6"/>
<dbReference type="OrthoDB" id="9804336at2"/>
<dbReference type="UniPathway" id="UPA00056">
    <property type="reaction ID" value="UER00095"/>
</dbReference>
<dbReference type="Proteomes" id="UP000008871">
    <property type="component" value="Chromosome"/>
</dbReference>
<dbReference type="GO" id="GO:0008685">
    <property type="term" value="F:2-C-methyl-D-erythritol 2,4-cyclodiphosphate synthase activity"/>
    <property type="evidence" value="ECO:0007669"/>
    <property type="project" value="UniProtKB-UniRule"/>
</dbReference>
<dbReference type="GO" id="GO:0046872">
    <property type="term" value="F:metal ion binding"/>
    <property type="evidence" value="ECO:0007669"/>
    <property type="project" value="UniProtKB-KW"/>
</dbReference>
<dbReference type="GO" id="GO:0019288">
    <property type="term" value="P:isopentenyl diphosphate biosynthetic process, methylerythritol 4-phosphate pathway"/>
    <property type="evidence" value="ECO:0007669"/>
    <property type="project" value="UniProtKB-UniRule"/>
</dbReference>
<dbReference type="GO" id="GO:0016114">
    <property type="term" value="P:terpenoid biosynthetic process"/>
    <property type="evidence" value="ECO:0007669"/>
    <property type="project" value="InterPro"/>
</dbReference>
<dbReference type="CDD" id="cd00554">
    <property type="entry name" value="MECDP_synthase"/>
    <property type="match status" value="1"/>
</dbReference>
<dbReference type="FunFam" id="3.30.1330.50:FF:000001">
    <property type="entry name" value="2-C-methyl-D-erythritol 2,4-cyclodiphosphate synthase"/>
    <property type="match status" value="1"/>
</dbReference>
<dbReference type="Gene3D" id="3.30.1330.50">
    <property type="entry name" value="2-C-methyl-D-erythritol 2,4-cyclodiphosphate synthase"/>
    <property type="match status" value="1"/>
</dbReference>
<dbReference type="HAMAP" id="MF_00107">
    <property type="entry name" value="IspF"/>
    <property type="match status" value="1"/>
</dbReference>
<dbReference type="InterPro" id="IPR003526">
    <property type="entry name" value="MECDP_synthase"/>
</dbReference>
<dbReference type="InterPro" id="IPR020555">
    <property type="entry name" value="MECDP_synthase_CS"/>
</dbReference>
<dbReference type="InterPro" id="IPR036571">
    <property type="entry name" value="MECDP_synthase_sf"/>
</dbReference>
<dbReference type="NCBIfam" id="TIGR00151">
    <property type="entry name" value="ispF"/>
    <property type="match status" value="1"/>
</dbReference>
<dbReference type="PANTHER" id="PTHR43181">
    <property type="entry name" value="2-C-METHYL-D-ERYTHRITOL 2,4-CYCLODIPHOSPHATE SYNTHASE, CHLOROPLASTIC"/>
    <property type="match status" value="1"/>
</dbReference>
<dbReference type="PANTHER" id="PTHR43181:SF1">
    <property type="entry name" value="2-C-METHYL-D-ERYTHRITOL 2,4-CYCLODIPHOSPHATE SYNTHASE, CHLOROPLASTIC"/>
    <property type="match status" value="1"/>
</dbReference>
<dbReference type="Pfam" id="PF02542">
    <property type="entry name" value="YgbB"/>
    <property type="match status" value="1"/>
</dbReference>
<dbReference type="SUPFAM" id="SSF69765">
    <property type="entry name" value="IpsF-like"/>
    <property type="match status" value="1"/>
</dbReference>
<dbReference type="PROSITE" id="PS01350">
    <property type="entry name" value="ISPF"/>
    <property type="match status" value="1"/>
</dbReference>
<protein>
    <recommendedName>
        <fullName evidence="1">2-C-methyl-D-erythritol 2,4-cyclodiphosphate synthase</fullName>
        <shortName evidence="1">MECDP-synthase</shortName>
        <shortName evidence="1">MECPP-synthase</shortName>
        <shortName evidence="1">MECPS</shortName>
        <ecNumber evidence="1">4.6.1.12</ecNumber>
    </recommendedName>
</protein>
<accession>Q0VQD3</accession>
<name>ISPF_ALCBS</name>
<organism>
    <name type="scientific">Alcanivorax borkumensis (strain ATCC 700651 / DSM 11573 / NCIMB 13689 / SK2)</name>
    <dbReference type="NCBI Taxonomy" id="393595"/>
    <lineage>
        <taxon>Bacteria</taxon>
        <taxon>Pseudomonadati</taxon>
        <taxon>Pseudomonadota</taxon>
        <taxon>Gammaproteobacteria</taxon>
        <taxon>Oceanospirillales</taxon>
        <taxon>Alcanivoracaceae</taxon>
        <taxon>Alcanivorax</taxon>
    </lineage>
</organism>
<feature type="chain" id="PRO_1000022803" description="2-C-methyl-D-erythritol 2,4-cyclodiphosphate synthase">
    <location>
        <begin position="1"/>
        <end position="160"/>
    </location>
</feature>
<feature type="binding site" evidence="1">
    <location>
        <begin position="11"/>
        <end position="13"/>
    </location>
    <ligand>
        <name>4-CDP-2-C-methyl-D-erythritol 2-phosphate</name>
        <dbReference type="ChEBI" id="CHEBI:57919"/>
    </ligand>
</feature>
<feature type="binding site" evidence="1">
    <location>
        <position position="11"/>
    </location>
    <ligand>
        <name>a divalent metal cation</name>
        <dbReference type="ChEBI" id="CHEBI:60240"/>
    </ligand>
</feature>
<feature type="binding site" evidence="1">
    <location>
        <position position="13"/>
    </location>
    <ligand>
        <name>a divalent metal cation</name>
        <dbReference type="ChEBI" id="CHEBI:60240"/>
    </ligand>
</feature>
<feature type="binding site" evidence="1">
    <location>
        <begin position="37"/>
        <end position="38"/>
    </location>
    <ligand>
        <name>4-CDP-2-C-methyl-D-erythritol 2-phosphate</name>
        <dbReference type="ChEBI" id="CHEBI:57919"/>
    </ligand>
</feature>
<feature type="binding site" evidence="1">
    <location>
        <position position="45"/>
    </location>
    <ligand>
        <name>a divalent metal cation</name>
        <dbReference type="ChEBI" id="CHEBI:60240"/>
    </ligand>
</feature>
<feature type="binding site" evidence="1">
    <location>
        <begin position="59"/>
        <end position="61"/>
    </location>
    <ligand>
        <name>4-CDP-2-C-methyl-D-erythritol 2-phosphate</name>
        <dbReference type="ChEBI" id="CHEBI:57919"/>
    </ligand>
</feature>
<feature type="binding site" evidence="1">
    <location>
        <begin position="64"/>
        <end position="68"/>
    </location>
    <ligand>
        <name>4-CDP-2-C-methyl-D-erythritol 2-phosphate</name>
        <dbReference type="ChEBI" id="CHEBI:57919"/>
    </ligand>
</feature>
<feature type="binding site" evidence="1">
    <location>
        <begin position="135"/>
        <end position="138"/>
    </location>
    <ligand>
        <name>4-CDP-2-C-methyl-D-erythritol 2-phosphate</name>
        <dbReference type="ChEBI" id="CHEBI:57919"/>
    </ligand>
</feature>
<feature type="binding site" evidence="1">
    <location>
        <position position="142"/>
    </location>
    <ligand>
        <name>4-CDP-2-C-methyl-D-erythritol 2-phosphate</name>
        <dbReference type="ChEBI" id="CHEBI:57919"/>
    </ligand>
</feature>
<feature type="binding site" evidence="1">
    <location>
        <position position="145"/>
    </location>
    <ligand>
        <name>4-CDP-2-C-methyl-D-erythritol 2-phosphate</name>
        <dbReference type="ChEBI" id="CHEBI:57919"/>
    </ligand>
</feature>
<feature type="site" description="Transition state stabilizer" evidence="1">
    <location>
        <position position="37"/>
    </location>
</feature>
<feature type="site" description="Transition state stabilizer" evidence="1">
    <location>
        <position position="136"/>
    </location>
</feature>
<reference key="1">
    <citation type="journal article" date="2006" name="Nat. Biotechnol.">
        <title>Genome sequence of the ubiquitous hydrocarbon-degrading marine bacterium Alcanivorax borkumensis.</title>
        <authorList>
            <person name="Schneiker S."/>
            <person name="Martins dos Santos V.A.P."/>
            <person name="Bartels D."/>
            <person name="Bekel T."/>
            <person name="Brecht M."/>
            <person name="Buhrmester J."/>
            <person name="Chernikova T.N."/>
            <person name="Denaro R."/>
            <person name="Ferrer M."/>
            <person name="Gertler C."/>
            <person name="Goesmann A."/>
            <person name="Golyshina O.V."/>
            <person name="Kaminski F."/>
            <person name="Khachane A.N."/>
            <person name="Lang S."/>
            <person name="Linke B."/>
            <person name="McHardy A.C."/>
            <person name="Meyer F."/>
            <person name="Nechitaylo T."/>
            <person name="Puehler A."/>
            <person name="Regenhardt D."/>
            <person name="Rupp O."/>
            <person name="Sabirova J.S."/>
            <person name="Selbitschka W."/>
            <person name="Yakimov M.M."/>
            <person name="Timmis K.N."/>
            <person name="Vorhoelter F.-J."/>
            <person name="Weidner S."/>
            <person name="Kaiser O."/>
            <person name="Golyshin P.N."/>
        </authorList>
    </citation>
    <scope>NUCLEOTIDE SEQUENCE [LARGE SCALE GENOMIC DNA]</scope>
    <source>
        <strain>ATCC 700651 / DSM 11573 / NCIMB 13689 / SK2</strain>
    </source>
</reference>
<keyword id="KW-0414">Isoprene biosynthesis</keyword>
<keyword id="KW-0456">Lyase</keyword>
<keyword id="KW-0479">Metal-binding</keyword>
<keyword id="KW-1185">Reference proteome</keyword>
<evidence type="ECO:0000255" key="1">
    <source>
        <dbReference type="HAMAP-Rule" id="MF_00107"/>
    </source>
</evidence>
<sequence>MVSVRIGQGFDVHAFDEGDHVMLGGVAIPHSHGLKAHSDGDVALHALSDALLGALALGDIGHHFPDTDPQWRGADSGQLLTAIYSSILDAGWRLGNADLTVICQAPKLAPHILAMRERIAALLQCEQGQVSVKATTTEKLGFTGRKEGIAVQAVVLLESQ</sequence>
<gene>
    <name evidence="1" type="primary">ispF</name>
    <name type="ordered locus">ABO_1167</name>
</gene>